<dbReference type="EMBL" id="AAEX03001951">
    <property type="status" value="NOT_ANNOTATED_CDS"/>
    <property type="molecule type" value="Genomic_DNA"/>
</dbReference>
<dbReference type="EMBL" id="AAEX03003224">
    <property type="status" value="NOT_ANNOTATED_CDS"/>
    <property type="molecule type" value="Genomic_DNA"/>
</dbReference>
<dbReference type="RefSeq" id="NP_001239220.1">
    <property type="nucleotide sequence ID" value="NM_001252291.1"/>
</dbReference>
<dbReference type="PDB" id="4UE5">
    <property type="method" value="EM"/>
    <property type="resolution" value="9.00 A"/>
    <property type="chains" value="F=14-120"/>
</dbReference>
<dbReference type="PDB" id="6FRK">
    <property type="method" value="EM"/>
    <property type="resolution" value="3.70 A"/>
    <property type="chains" value="q=13-117"/>
</dbReference>
<dbReference type="PDB" id="6R6G">
    <property type="method" value="EM"/>
    <property type="resolution" value="3.70 A"/>
    <property type="chains" value="AC=13-117"/>
</dbReference>
<dbReference type="PDB" id="7OBQ">
    <property type="method" value="EM"/>
    <property type="resolution" value="3.90 A"/>
    <property type="chains" value="q=1-144"/>
</dbReference>
<dbReference type="PDB" id="7OBR">
    <property type="method" value="EM"/>
    <property type="resolution" value="2.80 A"/>
    <property type="chains" value="q=1-144"/>
</dbReference>
<dbReference type="PDBsum" id="4UE5"/>
<dbReference type="PDBsum" id="6FRK"/>
<dbReference type="PDBsum" id="6R6G"/>
<dbReference type="PDBsum" id="7OBQ"/>
<dbReference type="PDBsum" id="7OBR"/>
<dbReference type="EMDB" id="EMD-12799"/>
<dbReference type="EMDB" id="EMD-12801"/>
<dbReference type="EMDB" id="EMD-4735"/>
<dbReference type="SMR" id="J9PAS6"/>
<dbReference type="FunCoup" id="J9PAS6">
    <property type="interactions" value="2457"/>
</dbReference>
<dbReference type="STRING" id="9615.ENSCAFP00000042903"/>
<dbReference type="PaxDb" id="9612-ENSCAFP00000042903"/>
<dbReference type="Ensembl" id="ENSCAFT00000094065.1">
    <property type="protein sequence ID" value="ENSCAFP00000072799.1"/>
    <property type="gene ID" value="ENSCAFG00000031549.3"/>
</dbReference>
<dbReference type="Ensembl" id="ENSCAFT00030027714.1">
    <property type="protein sequence ID" value="ENSCAFP00030024186.1"/>
    <property type="gene ID" value="ENSCAFG00030014933.1"/>
</dbReference>
<dbReference type="Ensembl" id="ENSCAFT00030031031.1">
    <property type="protein sequence ID" value="ENSCAFP00030027072.1"/>
    <property type="gene ID" value="ENSCAFG00030016821.1"/>
</dbReference>
<dbReference type="Ensembl" id="ENSCAFT00040015862.1">
    <property type="protein sequence ID" value="ENSCAFP00040013754.1"/>
    <property type="gene ID" value="ENSCAFG00040008463.1"/>
</dbReference>
<dbReference type="Ensembl" id="ENSCAFT00845006124.1">
    <property type="protein sequence ID" value="ENSCAFP00845004869.1"/>
    <property type="gene ID" value="ENSCAFG00845003444.1"/>
</dbReference>
<dbReference type="GeneID" id="606764"/>
<dbReference type="KEGG" id="cfa:606764"/>
<dbReference type="CTD" id="6728"/>
<dbReference type="VEuPathDB" id="HostDB:ENSCAFG00845003444"/>
<dbReference type="VGNC" id="VGNC:56002">
    <property type="gene designation" value="SRP19"/>
</dbReference>
<dbReference type="eggNOG" id="KOG3198">
    <property type="taxonomic scope" value="Eukaryota"/>
</dbReference>
<dbReference type="GeneTree" id="ENSGT00390000004950"/>
<dbReference type="HOGENOM" id="CLU_064201_2_1_1"/>
<dbReference type="InParanoid" id="J9PAS6"/>
<dbReference type="OMA" id="QMERWIC"/>
<dbReference type="OrthoDB" id="2190947at2759"/>
<dbReference type="TreeFam" id="TF106248"/>
<dbReference type="Reactome" id="R-CFA-1799339">
    <property type="pathway name" value="SRP-dependent cotranslational protein targeting to membrane"/>
</dbReference>
<dbReference type="EvolutionaryTrace" id="J9PAS6"/>
<dbReference type="Proteomes" id="UP000002254">
    <property type="component" value="Chromosome 3"/>
</dbReference>
<dbReference type="Proteomes" id="UP000694429">
    <property type="component" value="Chromosome 3"/>
</dbReference>
<dbReference type="Proteomes" id="UP000694429">
    <property type="component" value="Chromosome 4"/>
</dbReference>
<dbReference type="Proteomes" id="UP000694542">
    <property type="component" value="Chromosome 3"/>
</dbReference>
<dbReference type="Proteomes" id="UP000805418">
    <property type="component" value="Chromosome 3"/>
</dbReference>
<dbReference type="Bgee" id="ENSCAFG00000031549">
    <property type="expression patterns" value="Expressed in testis and 48 other cell types or tissues"/>
</dbReference>
<dbReference type="GO" id="GO:0005730">
    <property type="term" value="C:nucleolus"/>
    <property type="evidence" value="ECO:0007669"/>
    <property type="project" value="UniProtKB-SubCell"/>
</dbReference>
<dbReference type="GO" id="GO:0005654">
    <property type="term" value="C:nucleoplasm"/>
    <property type="evidence" value="ECO:0007669"/>
    <property type="project" value="UniProtKB-SubCell"/>
</dbReference>
<dbReference type="GO" id="GO:0005786">
    <property type="term" value="C:signal recognition particle, endoplasmic reticulum targeting"/>
    <property type="evidence" value="ECO:0000318"/>
    <property type="project" value="GO_Central"/>
</dbReference>
<dbReference type="GO" id="GO:0008312">
    <property type="term" value="F:7S RNA binding"/>
    <property type="evidence" value="ECO:0000318"/>
    <property type="project" value="GO_Central"/>
</dbReference>
<dbReference type="GO" id="GO:0006617">
    <property type="term" value="P:SRP-dependent cotranslational protein targeting to membrane, signal sequence recognition"/>
    <property type="evidence" value="ECO:0000318"/>
    <property type="project" value="GO_Central"/>
</dbReference>
<dbReference type="FunFam" id="3.30.56.30:FF:000001">
    <property type="entry name" value="signal recognition particle 19 kDa protein"/>
    <property type="match status" value="1"/>
</dbReference>
<dbReference type="Gene3D" id="3.30.56.30">
    <property type="entry name" value="Signal recognition particle, SRP19-like subunit"/>
    <property type="match status" value="1"/>
</dbReference>
<dbReference type="InterPro" id="IPR002778">
    <property type="entry name" value="Signal_recog_particle_SRP19"/>
</dbReference>
<dbReference type="InterPro" id="IPR036521">
    <property type="entry name" value="SRP19-like_sf"/>
</dbReference>
<dbReference type="PANTHER" id="PTHR17453">
    <property type="entry name" value="SIGNAL RECOGNITION PARTICLE 19 KD PROTEIN"/>
    <property type="match status" value="1"/>
</dbReference>
<dbReference type="PANTHER" id="PTHR17453:SF0">
    <property type="entry name" value="SIGNAL RECOGNITION PARTICLE 19 KDA PROTEIN"/>
    <property type="match status" value="1"/>
</dbReference>
<dbReference type="Pfam" id="PF01922">
    <property type="entry name" value="SRP19"/>
    <property type="match status" value="1"/>
</dbReference>
<dbReference type="SUPFAM" id="SSF69695">
    <property type="entry name" value="SRP19"/>
    <property type="match status" value="1"/>
</dbReference>
<organism evidence="6">
    <name type="scientific">Canis lupus familiaris</name>
    <name type="common">Dog</name>
    <name type="synonym">Canis familiaris</name>
    <dbReference type="NCBI Taxonomy" id="9615"/>
    <lineage>
        <taxon>Eukaryota</taxon>
        <taxon>Metazoa</taxon>
        <taxon>Chordata</taxon>
        <taxon>Craniata</taxon>
        <taxon>Vertebrata</taxon>
        <taxon>Euteleostomi</taxon>
        <taxon>Mammalia</taxon>
        <taxon>Eutheria</taxon>
        <taxon>Laurasiatheria</taxon>
        <taxon>Carnivora</taxon>
        <taxon>Caniformia</taxon>
        <taxon>Canidae</taxon>
        <taxon>Canis</taxon>
    </lineage>
</organism>
<keyword id="KW-0002">3D-structure</keyword>
<keyword id="KW-0963">Cytoplasm</keyword>
<keyword id="KW-0539">Nucleus</keyword>
<keyword id="KW-1185">Reference proteome</keyword>
<keyword id="KW-0687">Ribonucleoprotein</keyword>
<keyword id="KW-0694">RNA-binding</keyword>
<keyword id="KW-0733">Signal recognition particle</keyword>
<protein>
    <recommendedName>
        <fullName evidence="5">Signal recognition particle 19 kDa protein</fullName>
        <shortName evidence="5">SRP19</shortName>
    </recommendedName>
</protein>
<comment type="function">
    <text evidence="3 4">Component of the signal recognition particle (SRP) complex, a ribonucleoprotein complex that mediates the cotranslational targeting of secretory and membrane proteins to the endoplasmic reticulum (ER) (PubMed:6413076, PubMed:6938958). Binds directly to 7SL RNA (PubMed:6413076). Mediates binding of SRP54 to the SRP complex (PubMed:6413076).</text>
</comment>
<comment type="subunit">
    <text evidence="1 3 4">Component of a signal recognition particle complex that consists of a 7SL RNA molecule of 300 nucleotides and six protein subunits: SRP72, SRP68, SRP54, SRP19, SRP14 and SRP9. Interacts with IPO5, IPO7, IPO8, KPNB1 and TNPO1. Interactions with IPO8 and TNPO1 may be involved in SRP19 import into the nucleus (By similarity).</text>
</comment>
<comment type="subcellular location">
    <subcellularLocation>
        <location evidence="1">Cytoplasm</location>
    </subcellularLocation>
    <subcellularLocation>
        <location evidence="1">Nucleus</location>
        <location evidence="1">Nucleolus</location>
    </subcellularLocation>
    <subcellularLocation>
        <location evidence="1">Nucleus</location>
        <location evidence="1">Nucleoplasm</location>
    </subcellularLocation>
    <text evidence="1">Although the signal recognition particle complex acts in the cytoplasm, it assembles at least in part in the nucleus and/or the nucleolus. SRP19 nuclear import may be mediated by IPO8/Imp8 and TPNO1/Trn.</text>
</comment>
<comment type="similarity">
    <text evidence="5">Belongs to the SRP19 family.</text>
</comment>
<accession>J9PAS6</accession>
<sequence length="144" mass="16156">MACAAARSPAEQDRFICIYPAYLNNKKTIAEGRRIPISKAVENPTATEIQDVCSAVGLNVFLEKNKMYSREWNRDVQYRGRVRVQLKQEDGSLCLVQFPSRKSVMLYAAEMIPKLKTRTQKTGGGDQSLQQGEGSKKGKGKKKK</sequence>
<reference evidence="6" key="1">
    <citation type="journal article" date="2005" name="Nature">
        <title>Genome sequence, comparative analysis and haplotype structure of the domestic dog.</title>
        <authorList>
            <person name="Lindblad-Toh K."/>
            <person name="Wade C.M."/>
            <person name="Mikkelsen T.S."/>
            <person name="Karlsson E.K."/>
            <person name="Jaffe D.B."/>
            <person name="Kamal M."/>
            <person name="Clamp M."/>
            <person name="Chang J.L."/>
            <person name="Kulbokas E.J. III"/>
            <person name="Zody M.C."/>
            <person name="Mauceli E."/>
            <person name="Xie X."/>
            <person name="Breen M."/>
            <person name="Wayne R.K."/>
            <person name="Ostrander E.A."/>
            <person name="Ponting C.P."/>
            <person name="Galibert F."/>
            <person name="Smith D.R."/>
            <person name="deJong P.J."/>
            <person name="Kirkness E.F."/>
            <person name="Alvarez P."/>
            <person name="Biagi T."/>
            <person name="Brockman W."/>
            <person name="Butler J."/>
            <person name="Chin C.-W."/>
            <person name="Cook A."/>
            <person name="Cuff J."/>
            <person name="Daly M.J."/>
            <person name="DeCaprio D."/>
            <person name="Gnerre S."/>
            <person name="Grabherr M."/>
            <person name="Kellis M."/>
            <person name="Kleber M."/>
            <person name="Bardeleben C."/>
            <person name="Goodstadt L."/>
            <person name="Heger A."/>
            <person name="Hitte C."/>
            <person name="Kim L."/>
            <person name="Koepfli K.-P."/>
            <person name="Parker H.G."/>
            <person name="Pollinger J.P."/>
            <person name="Searle S.M.J."/>
            <person name="Sutter N.B."/>
            <person name="Thomas R."/>
            <person name="Webber C."/>
            <person name="Baldwin J."/>
            <person name="Abebe A."/>
            <person name="Abouelleil A."/>
            <person name="Aftuck L."/>
            <person name="Ait-Zahra M."/>
            <person name="Aldredge T."/>
            <person name="Allen N."/>
            <person name="An P."/>
            <person name="Anderson S."/>
            <person name="Antoine C."/>
            <person name="Arachchi H."/>
            <person name="Aslam A."/>
            <person name="Ayotte L."/>
            <person name="Bachantsang P."/>
            <person name="Barry A."/>
            <person name="Bayul T."/>
            <person name="Benamara M."/>
            <person name="Berlin A."/>
            <person name="Bessette D."/>
            <person name="Blitshteyn B."/>
            <person name="Bloom T."/>
            <person name="Blye J."/>
            <person name="Boguslavskiy L."/>
            <person name="Bonnet C."/>
            <person name="Boukhgalter B."/>
            <person name="Brown A."/>
            <person name="Cahill P."/>
            <person name="Calixte N."/>
            <person name="Camarata J."/>
            <person name="Cheshatsang Y."/>
            <person name="Chu J."/>
            <person name="Citroen M."/>
            <person name="Collymore A."/>
            <person name="Cooke P."/>
            <person name="Dawoe T."/>
            <person name="Daza R."/>
            <person name="Decktor K."/>
            <person name="DeGray S."/>
            <person name="Dhargay N."/>
            <person name="Dooley K."/>
            <person name="Dooley K."/>
            <person name="Dorje P."/>
            <person name="Dorjee K."/>
            <person name="Dorris L."/>
            <person name="Duffey N."/>
            <person name="Dupes A."/>
            <person name="Egbiremolen O."/>
            <person name="Elong R."/>
            <person name="Falk J."/>
            <person name="Farina A."/>
            <person name="Faro S."/>
            <person name="Ferguson D."/>
            <person name="Ferreira P."/>
            <person name="Fisher S."/>
            <person name="FitzGerald M."/>
            <person name="Foley K."/>
            <person name="Foley C."/>
            <person name="Franke A."/>
            <person name="Friedrich D."/>
            <person name="Gage D."/>
            <person name="Garber M."/>
            <person name="Gearin G."/>
            <person name="Giannoukos G."/>
            <person name="Goode T."/>
            <person name="Goyette A."/>
            <person name="Graham J."/>
            <person name="Grandbois E."/>
            <person name="Gyaltsen K."/>
            <person name="Hafez N."/>
            <person name="Hagopian D."/>
            <person name="Hagos B."/>
            <person name="Hall J."/>
            <person name="Healy C."/>
            <person name="Hegarty R."/>
            <person name="Honan T."/>
            <person name="Horn A."/>
            <person name="Houde N."/>
            <person name="Hughes L."/>
            <person name="Hunnicutt L."/>
            <person name="Husby M."/>
            <person name="Jester B."/>
            <person name="Jones C."/>
            <person name="Kamat A."/>
            <person name="Kanga B."/>
            <person name="Kells C."/>
            <person name="Khazanovich D."/>
            <person name="Kieu A.C."/>
            <person name="Kisner P."/>
            <person name="Kumar M."/>
            <person name="Lance K."/>
            <person name="Landers T."/>
            <person name="Lara M."/>
            <person name="Lee W."/>
            <person name="Leger J.-P."/>
            <person name="Lennon N."/>
            <person name="Leuper L."/>
            <person name="LeVine S."/>
            <person name="Liu J."/>
            <person name="Liu X."/>
            <person name="Lokyitsang Y."/>
            <person name="Lokyitsang T."/>
            <person name="Lui A."/>
            <person name="Macdonald J."/>
            <person name="Major J."/>
            <person name="Marabella R."/>
            <person name="Maru K."/>
            <person name="Matthews C."/>
            <person name="McDonough S."/>
            <person name="Mehta T."/>
            <person name="Meldrim J."/>
            <person name="Melnikov A."/>
            <person name="Meneus L."/>
            <person name="Mihalev A."/>
            <person name="Mihova T."/>
            <person name="Miller K."/>
            <person name="Mittelman R."/>
            <person name="Mlenga V."/>
            <person name="Mulrain L."/>
            <person name="Munson G."/>
            <person name="Navidi A."/>
            <person name="Naylor J."/>
            <person name="Nguyen T."/>
            <person name="Nguyen N."/>
            <person name="Nguyen C."/>
            <person name="Nguyen T."/>
            <person name="Nicol R."/>
            <person name="Norbu N."/>
            <person name="Norbu C."/>
            <person name="Novod N."/>
            <person name="Nyima T."/>
            <person name="Olandt P."/>
            <person name="O'Neill B."/>
            <person name="O'Neill K."/>
            <person name="Osman S."/>
            <person name="Oyono L."/>
            <person name="Patti C."/>
            <person name="Perrin D."/>
            <person name="Phunkhang P."/>
            <person name="Pierre F."/>
            <person name="Priest M."/>
            <person name="Rachupka A."/>
            <person name="Raghuraman S."/>
            <person name="Rameau R."/>
            <person name="Ray V."/>
            <person name="Raymond C."/>
            <person name="Rege F."/>
            <person name="Rise C."/>
            <person name="Rogers J."/>
            <person name="Rogov P."/>
            <person name="Sahalie J."/>
            <person name="Settipalli S."/>
            <person name="Sharpe T."/>
            <person name="Shea T."/>
            <person name="Sheehan M."/>
            <person name="Sherpa N."/>
            <person name="Shi J."/>
            <person name="Shih D."/>
            <person name="Sloan J."/>
            <person name="Smith C."/>
            <person name="Sparrow T."/>
            <person name="Stalker J."/>
            <person name="Stange-Thomann N."/>
            <person name="Stavropoulos S."/>
            <person name="Stone C."/>
            <person name="Stone S."/>
            <person name="Sykes S."/>
            <person name="Tchuinga P."/>
            <person name="Tenzing P."/>
            <person name="Tesfaye S."/>
            <person name="Thoulutsang D."/>
            <person name="Thoulutsang Y."/>
            <person name="Topham K."/>
            <person name="Topping I."/>
            <person name="Tsamla T."/>
            <person name="Vassiliev H."/>
            <person name="Venkataraman V."/>
            <person name="Vo A."/>
            <person name="Wangchuk T."/>
            <person name="Wangdi T."/>
            <person name="Weiand M."/>
            <person name="Wilkinson J."/>
            <person name="Wilson A."/>
            <person name="Yadav S."/>
            <person name="Yang S."/>
            <person name="Yang X."/>
            <person name="Young G."/>
            <person name="Yu Q."/>
            <person name="Zainoun J."/>
            <person name="Zembek L."/>
            <person name="Zimmer A."/>
            <person name="Lander E.S."/>
        </authorList>
    </citation>
    <scope>NUCLEOTIDE SEQUENCE [LARGE SCALE GENOMIC DNA]</scope>
    <source>
        <strain evidence="6">Boxer</strain>
    </source>
</reference>
<reference key="2">
    <citation type="journal article" date="1980" name="Proc. Natl. Acad. Sci. U.S.A.">
        <title>Purification of a membrane-associated protein complex required for protein translocation across the endoplasmic reticulum.</title>
        <authorList>
            <person name="Walter P."/>
            <person name="Blobel G."/>
        </authorList>
    </citation>
    <scope>FUNCTION</scope>
    <scope>IDENTIFICATION IN A SIGNAL RECOGNITION PARTICLE COMPLEX</scope>
</reference>
<reference key="3">
    <citation type="journal article" date="1983" name="Cell">
        <title>Disassembly and reconstitution of signal recognition particle.</title>
        <authorList>
            <person name="Walter P."/>
            <person name="Blobel G."/>
        </authorList>
    </citation>
    <scope>FUNCTION</scope>
    <scope>RNA BINDING</scope>
    <scope>SUBUNIT</scope>
</reference>
<reference evidence="8" key="4">
    <citation type="journal article" date="2015" name="Nat. Struct. Mol. Biol.">
        <title>Translational arrest by a prokaryotic signal recognition particle is mediated by RNA interactions.</title>
        <authorList>
            <person name="Beckert B."/>
            <person name="Kedrov A."/>
            <person name="Sohmen D."/>
            <person name="Kempf G."/>
            <person name="Wild K."/>
            <person name="Sinning I."/>
            <person name="Stahlberg H."/>
            <person name="Wilson D.N."/>
            <person name="Beckmann R."/>
        </authorList>
    </citation>
    <scope>STRUCTURE BY ELECTRON MICROSCOPY (9.00 ANGSTROMS) OF 14-120</scope>
</reference>
<reference evidence="9" key="5">
    <citation type="journal article" date="2018" name="Science">
        <title>Structure of a prehandover mammalian ribosomal SRPSRP receptor targeting complex.</title>
        <authorList>
            <person name="Kobayashi K."/>
            <person name="Jomaa A."/>
            <person name="Lee J.H."/>
            <person name="Chandrasekar S."/>
            <person name="Boehringer D."/>
            <person name="Shan S.O."/>
            <person name="Ban N."/>
        </authorList>
    </citation>
    <scope>STRUCTURE BY ELECTRON MICROSCOPY (3.70 ANGSTROMS) OF 13-117</scope>
</reference>
<reference evidence="10" key="6">
    <citation type="journal article" date="2019" name="Elife">
        <title>Structural and mutational analysis of the ribosome-arresting human XBP1u.</title>
        <authorList>
            <person name="Shanmuganathan V."/>
            <person name="Schiller N."/>
            <person name="Magoulopoulou A."/>
            <person name="Cheng J."/>
            <person name="Braunger K."/>
            <person name="Cymer F."/>
            <person name="Berninghausen O."/>
            <person name="Beatrix B."/>
            <person name="Kohno K."/>
            <person name="von Heijne G."/>
            <person name="Beckmann R."/>
        </authorList>
    </citation>
    <scope>STRUCTURE BY ELECTRON MICROSCOPY (3.70 ANGSTROMS) OF 13-117</scope>
</reference>
<reference evidence="11 12" key="7">
    <citation type="journal article" date="2021" name="Cell Rep.">
        <title>Molecular mechanism of cargo recognition and handover by the mammalian signal recognition particle.</title>
        <authorList>
            <person name="Jomaa A."/>
            <person name="Eitzinger S."/>
            <person name="Zhu Z."/>
            <person name="Chandrasekar S."/>
            <person name="Kobayashi K."/>
            <person name="Shan S.O."/>
            <person name="Ban N."/>
        </authorList>
    </citation>
    <scope>STRUCTURE BY ELECTRON MICROSCOPY (2.80 ANGSTROMS) IN COMPLEX WITH RIBOSOME NASCENT CHAIN COMPLEX AND THE SRP RECEPTOR</scope>
</reference>
<gene>
    <name evidence="7" type="primary">SRP19</name>
</gene>
<feature type="chain" id="PRO_0000455158" description="Signal recognition particle 19 kDa protein">
    <location>
        <begin position="1"/>
        <end position="144"/>
    </location>
</feature>
<feature type="region of interest" description="Disordered" evidence="2">
    <location>
        <begin position="117"/>
        <end position="144"/>
    </location>
</feature>
<evidence type="ECO:0000250" key="1">
    <source>
        <dbReference type="UniProtKB" id="P09132"/>
    </source>
</evidence>
<evidence type="ECO:0000256" key="2">
    <source>
        <dbReference type="SAM" id="MobiDB-lite"/>
    </source>
</evidence>
<evidence type="ECO:0000269" key="3">
    <source>
    </source>
</evidence>
<evidence type="ECO:0000269" key="4">
    <source>
    </source>
</evidence>
<evidence type="ECO:0000305" key="5"/>
<evidence type="ECO:0000312" key="6">
    <source>
        <dbReference type="Proteomes" id="UP000002254"/>
    </source>
</evidence>
<evidence type="ECO:0000312" key="7">
    <source>
        <dbReference type="VGNC" id="VGNC:56002"/>
    </source>
</evidence>
<evidence type="ECO:0007744" key="8">
    <source>
        <dbReference type="PDB" id="4UE5"/>
    </source>
</evidence>
<evidence type="ECO:0007744" key="9">
    <source>
        <dbReference type="PDB" id="6FRK"/>
    </source>
</evidence>
<evidence type="ECO:0007744" key="10">
    <source>
        <dbReference type="PDB" id="6R6G"/>
    </source>
</evidence>
<evidence type="ECO:0007744" key="11">
    <source>
        <dbReference type="PDB" id="7OBQ"/>
    </source>
</evidence>
<evidence type="ECO:0007744" key="12">
    <source>
        <dbReference type="PDB" id="7OBR"/>
    </source>
</evidence>
<name>SRP19_CANLF</name>
<proteinExistence type="evidence at protein level"/>